<comment type="function">
    <text>P-II indirectly controls the transcription of the GS gene (glnA). P-II prevents NR-II-catalyzed conversion of NR-I to NR-I-phosphate, the transcriptional activator of glnA. When P-II is phosphorylated, these events are reversed. In nitrogen-limiting conditions, when the ratio of Gln to 2-ketoglutarate decreases, P-II is phosphorylated which allows the deadenylation of glutamine synthetase (GS), thus activating the enzyme.</text>
</comment>
<comment type="subunit">
    <text>Homotrimer.</text>
</comment>
<comment type="interaction">
    <interactant intactId="EBI-700889">
        <id>P0A3F4</id>
    </interactant>
    <interactant intactId="EBI-700898">
        <id>Q6V1L5</id>
        <label>argB</label>
    </interactant>
    <organismsDiffer>false</organismsDiffer>
    <experiments>12</experiments>
</comment>
<comment type="interaction">
    <interactant intactId="EBI-700889">
        <id>P0A3F4</id>
    </interactant>
    <interactant intactId="EBI-700889">
        <id>P0A3F4</id>
        <label>glnB</label>
    </interactant>
    <organismsDiffer>false</organismsDiffer>
    <experiments>5</experiments>
</comment>
<comment type="interaction">
    <interactant intactId="EBI-700889">
        <id>P0A3F4</id>
    </interactant>
    <interactant intactId="EBI-700982">
        <id>Q7X386</id>
        <label>Synpcc7942_2061</label>
    </interactant>
    <organismsDiffer>false</organismsDiffer>
    <experiments>9</experiments>
</comment>
<comment type="interaction">
    <interactant intactId="EBI-700889">
        <id>P0A3F4</id>
    </interactant>
    <interactant intactId="EBI-7629960">
        <id>Q8DGS1</id>
        <label>tlr2243</label>
    </interactant>
    <organismsDiffer>true</organismsDiffer>
    <experiments>8</experiments>
</comment>
<comment type="PTM">
    <text evidence="2 3">Phosphorylation dependent on the nitrogen source and spectral light quality.</text>
</comment>
<comment type="similarity">
    <text evidence="1">Belongs to the P(II) protein family.</text>
</comment>
<proteinExistence type="evidence at protein level"/>
<protein>
    <recommendedName>
        <fullName>Nitrogen regulatory protein P-II</fullName>
    </recommendedName>
    <alternativeName>
        <fullName>PII signal transducing protein</fullName>
    </alternativeName>
</protein>
<organism>
    <name type="scientific">Synechococcus elongatus (strain ATCC 33912 / PCC 7942 / FACHB-805)</name>
    <name type="common">Anacystis nidulans R2</name>
    <dbReference type="NCBI Taxonomy" id="1140"/>
    <lineage>
        <taxon>Bacteria</taxon>
        <taxon>Bacillati</taxon>
        <taxon>Cyanobacteriota</taxon>
        <taxon>Cyanophyceae</taxon>
        <taxon>Synechococcales</taxon>
        <taxon>Synechococcaceae</taxon>
        <taxon>Synechococcus</taxon>
    </lineage>
</organism>
<reference key="1">
    <citation type="journal article" date="1991" name="Proc. Natl. Acad. Sci. U.S.A.">
        <title>Photosynthetic electron transport controls nitrogen assimilation in cyanobacteria by means of posttranslational modification of the glnB gene product.</title>
        <authorList>
            <person name="Tsinoremas N.F."/>
            <person name="Castets A.M."/>
            <person name="Harrison M.A."/>
            <person name="Allen J.F."/>
            <person name="Tandeau de Marsac N."/>
        </authorList>
    </citation>
    <scope>NUCLEOTIDE SEQUENCE [GENOMIC DNA]</scope>
</reference>
<reference key="2">
    <citation type="submission" date="2005-08" db="EMBL/GenBank/DDBJ databases">
        <title>Complete sequence of chromosome 1 of Synechococcus elongatus PCC 7942.</title>
        <authorList>
            <consortium name="US DOE Joint Genome Institute"/>
            <person name="Copeland A."/>
            <person name="Lucas S."/>
            <person name="Lapidus A."/>
            <person name="Barry K."/>
            <person name="Detter J.C."/>
            <person name="Glavina T."/>
            <person name="Hammon N."/>
            <person name="Israni S."/>
            <person name="Pitluck S."/>
            <person name="Schmutz J."/>
            <person name="Larimer F."/>
            <person name="Land M."/>
            <person name="Kyrpides N."/>
            <person name="Lykidis A."/>
            <person name="Golden S."/>
            <person name="Richardson P."/>
        </authorList>
    </citation>
    <scope>NUCLEOTIDE SEQUENCE [LARGE SCALE GENOMIC DNA]</scope>
    <source>
        <strain>ATCC 33912 / PCC 7942 / FACHB-805</strain>
    </source>
</reference>
<reference key="3">
    <citation type="journal article" date="1994" name="J. Bacteriol.">
        <title>The PII protein in the cyanobacterium Synechococcus sp. strain PCC 7942 is modified by serine phosphorylation and signals the cellular N-status.</title>
        <authorList>
            <person name="Forchhammer K."/>
            <person name="Tandeau de Marsac N."/>
        </authorList>
    </citation>
    <scope>PHOSPHORYLATION</scope>
</reference>
<reference key="4">
    <citation type="journal article" date="1995" name="J. Bacteriol.">
        <title>Phosphorylation of the PII protein (glnB gene product) in the cyanobacterium Synechococcus sp. strain PCC 7942: analysis of in vitro kinase activity.</title>
        <authorList>
            <person name="Forchhammer K."/>
            <person name="Tandeau de Marsac N."/>
        </authorList>
    </citation>
    <scope>PHOSPHORYLATION AT SER-49</scope>
</reference>
<reference key="5">
    <citation type="journal article" date="2003" name="Acta Crystallogr. D">
        <title>The structures of the PII proteins from the cyanobacteria Synechococcus sp. PCC 7942 and Synechocystis sp. PCC 6803.</title>
        <authorList>
            <person name="Xu Y."/>
            <person name="Carr P.D."/>
            <person name="Clancy P."/>
            <person name="Garcia-Dominguez M."/>
            <person name="Forchhammer K."/>
            <person name="Florencio F."/>
            <person name="Vasudevan S.G."/>
            <person name="Tandeau de Marsac N."/>
            <person name="Ollis D.L."/>
        </authorList>
    </citation>
    <scope>X-RAY CRYSTALLOGRAPHY (2.0 ANGSTROMS)</scope>
</reference>
<gene>
    <name type="primary">glnB</name>
    <name type="ordered locus">Synpcc7942_0321</name>
</gene>
<name>GLNB_SYNE7</name>
<dbReference type="EMBL" id="M62447">
    <property type="protein sequence ID" value="AAA27312.1"/>
    <property type="molecule type" value="Genomic_DNA"/>
</dbReference>
<dbReference type="EMBL" id="CP000100">
    <property type="protein sequence ID" value="ABB56353.1"/>
    <property type="molecule type" value="Genomic_DNA"/>
</dbReference>
<dbReference type="PIR" id="A39696">
    <property type="entry name" value="A39696"/>
</dbReference>
<dbReference type="RefSeq" id="WP_011243504.1">
    <property type="nucleotide sequence ID" value="NZ_JACJTX010000002.1"/>
</dbReference>
<dbReference type="PDB" id="1QY7">
    <property type="method" value="X-ray"/>
    <property type="resolution" value="2.00 A"/>
    <property type="chains" value="A/B/C=1-112"/>
</dbReference>
<dbReference type="PDB" id="2JJ4">
    <property type="method" value="X-ray"/>
    <property type="resolution" value="3.46 A"/>
    <property type="chains" value="D/E/F=1-112"/>
</dbReference>
<dbReference type="PDB" id="2V5H">
    <property type="method" value="X-ray"/>
    <property type="resolution" value="2.75 A"/>
    <property type="chains" value="G/H/I/J/K/L=1-112"/>
</dbReference>
<dbReference type="PDB" id="2XBP">
    <property type="method" value="X-ray"/>
    <property type="resolution" value="1.20 A"/>
    <property type="chains" value="A=1-112"/>
</dbReference>
<dbReference type="PDB" id="2XG8">
    <property type="method" value="X-ray"/>
    <property type="resolution" value="3.20 A"/>
    <property type="chains" value="A/B/C=1-112"/>
</dbReference>
<dbReference type="PDB" id="2XUL">
    <property type="method" value="X-ray"/>
    <property type="resolution" value="2.20 A"/>
    <property type="chains" value="A/B/C/D/E/F=1-112"/>
</dbReference>
<dbReference type="PDB" id="2XZW">
    <property type="method" value="X-ray"/>
    <property type="resolution" value="1.95 A"/>
    <property type="chains" value="A/B/C/D/E/F/G/H/I=1-112"/>
</dbReference>
<dbReference type="PDB" id="4AFF">
    <property type="method" value="X-ray"/>
    <property type="resolution" value="1.05 A"/>
    <property type="chains" value="A=1-112"/>
</dbReference>
<dbReference type="PDB" id="4C3K">
    <property type="method" value="X-ray"/>
    <property type="resolution" value="3.10 A"/>
    <property type="chains" value="A/B/C/D/E/F=1-112"/>
</dbReference>
<dbReference type="PDB" id="4C3L">
    <property type="method" value="X-ray"/>
    <property type="resolution" value="1.60 A"/>
    <property type="chains" value="A=1-112"/>
</dbReference>
<dbReference type="PDB" id="4C3M">
    <property type="method" value="X-ray"/>
    <property type="resolution" value="2.15 A"/>
    <property type="chains" value="A/B/C=1-112"/>
</dbReference>
<dbReference type="PDBsum" id="1QY7"/>
<dbReference type="PDBsum" id="2JJ4"/>
<dbReference type="PDBsum" id="2V5H"/>
<dbReference type="PDBsum" id="2XBP"/>
<dbReference type="PDBsum" id="2XG8"/>
<dbReference type="PDBsum" id="2XUL"/>
<dbReference type="PDBsum" id="2XZW"/>
<dbReference type="PDBsum" id="4AFF"/>
<dbReference type="PDBsum" id="4C3K"/>
<dbReference type="PDBsum" id="4C3L"/>
<dbReference type="PDBsum" id="4C3M"/>
<dbReference type="SMR" id="P0A3F4"/>
<dbReference type="DIP" id="DIP-35002N"/>
<dbReference type="IntAct" id="P0A3F4">
    <property type="interactions" value="9"/>
</dbReference>
<dbReference type="MINT" id="P0A3F4"/>
<dbReference type="STRING" id="1140.Synpcc7942_0321"/>
<dbReference type="iPTMnet" id="P0A3F4"/>
<dbReference type="PaxDb" id="1140-Synpcc7942_0321"/>
<dbReference type="KEGG" id="syf:Synpcc7942_0321"/>
<dbReference type="eggNOG" id="COG0347">
    <property type="taxonomic scope" value="Bacteria"/>
</dbReference>
<dbReference type="HOGENOM" id="CLU_082268_0_0_3"/>
<dbReference type="OrthoDB" id="9802729at2"/>
<dbReference type="BioCyc" id="SYNEL:SYNPCC7942_0321-MONOMER"/>
<dbReference type="EvolutionaryTrace" id="P0A3F4"/>
<dbReference type="Proteomes" id="UP000889800">
    <property type="component" value="Chromosome"/>
</dbReference>
<dbReference type="GO" id="GO:0005829">
    <property type="term" value="C:cytosol"/>
    <property type="evidence" value="ECO:0007669"/>
    <property type="project" value="TreeGrafter"/>
</dbReference>
<dbReference type="GO" id="GO:0005524">
    <property type="term" value="F:ATP binding"/>
    <property type="evidence" value="ECO:0007669"/>
    <property type="project" value="TreeGrafter"/>
</dbReference>
<dbReference type="GO" id="GO:0030234">
    <property type="term" value="F:enzyme regulator activity"/>
    <property type="evidence" value="ECO:0007669"/>
    <property type="project" value="InterPro"/>
</dbReference>
<dbReference type="GO" id="GO:0042802">
    <property type="term" value="F:identical protein binding"/>
    <property type="evidence" value="ECO:0000353"/>
    <property type="project" value="IntAct"/>
</dbReference>
<dbReference type="GO" id="GO:0006808">
    <property type="term" value="P:regulation of nitrogen utilization"/>
    <property type="evidence" value="ECO:0007669"/>
    <property type="project" value="InterPro"/>
</dbReference>
<dbReference type="FunFam" id="3.30.70.120:FF:000001">
    <property type="entry name" value="Nitrogen regulatory protein P-II"/>
    <property type="match status" value="1"/>
</dbReference>
<dbReference type="Gene3D" id="3.30.70.120">
    <property type="match status" value="1"/>
</dbReference>
<dbReference type="InterPro" id="IPR002187">
    <property type="entry name" value="N-reg_PII"/>
</dbReference>
<dbReference type="InterPro" id="IPR011322">
    <property type="entry name" value="N-reg_PII-like_a/b"/>
</dbReference>
<dbReference type="InterPro" id="IPR015867">
    <property type="entry name" value="N-reg_PII/ATP_PRibTrfase_C"/>
</dbReference>
<dbReference type="InterPro" id="IPR017918">
    <property type="entry name" value="N-reg_PII_CS"/>
</dbReference>
<dbReference type="InterPro" id="IPR002332">
    <property type="entry name" value="N-reg_PII_urydylation_site"/>
</dbReference>
<dbReference type="PANTHER" id="PTHR30115">
    <property type="entry name" value="NITROGEN REGULATORY PROTEIN P-II"/>
    <property type="match status" value="1"/>
</dbReference>
<dbReference type="PANTHER" id="PTHR30115:SF11">
    <property type="entry name" value="NITROGEN REGULATORY PROTEIN P-II HOMOLOG"/>
    <property type="match status" value="1"/>
</dbReference>
<dbReference type="Pfam" id="PF00543">
    <property type="entry name" value="P-II"/>
    <property type="match status" value="1"/>
</dbReference>
<dbReference type="PIRSF" id="PIRSF039144">
    <property type="entry name" value="GlnB"/>
    <property type="match status" value="1"/>
</dbReference>
<dbReference type="PRINTS" id="PR00340">
    <property type="entry name" value="PIIGLNB"/>
</dbReference>
<dbReference type="SMART" id="SM00938">
    <property type="entry name" value="P-II"/>
    <property type="match status" value="1"/>
</dbReference>
<dbReference type="SUPFAM" id="SSF54913">
    <property type="entry name" value="GlnB-like"/>
    <property type="match status" value="1"/>
</dbReference>
<dbReference type="PROSITE" id="PS00638">
    <property type="entry name" value="PII_GLNB_CTER"/>
    <property type="match status" value="1"/>
</dbReference>
<dbReference type="PROSITE" id="PS51343">
    <property type="entry name" value="PII_GLNB_DOM"/>
    <property type="match status" value="1"/>
</dbReference>
<dbReference type="PROSITE" id="PS00496">
    <property type="entry name" value="PII_GLNB_UMP"/>
    <property type="match status" value="1"/>
</dbReference>
<accession>P0A3F4</accession>
<accession>P80016</accession>
<accession>Q31RG6</accession>
<keyword id="KW-0002">3D-structure</keyword>
<keyword id="KW-0547">Nucleotide-binding</keyword>
<keyword id="KW-0597">Phosphoprotein</keyword>
<keyword id="KW-1185">Reference proteome</keyword>
<keyword id="KW-0804">Transcription</keyword>
<keyword id="KW-0805">Transcription regulation</keyword>
<sequence length="112" mass="12391">MKKIEAIIRPFKLDEVKIALVNAGIVGMTVSEVRGFGRQKGQTERYRGSEYTVEFLQKLKLEIVVEDAQVDTVIDKIVAAARTGEIGDGKIFVSPVDQTIRIRTGEKNADAI</sequence>
<evidence type="ECO:0000255" key="1">
    <source>
        <dbReference type="PROSITE-ProRule" id="PRU00675"/>
    </source>
</evidence>
<evidence type="ECO:0000269" key="2">
    <source>
    </source>
</evidence>
<evidence type="ECO:0000269" key="3">
    <source>
    </source>
</evidence>
<evidence type="ECO:0000305" key="4"/>
<evidence type="ECO:0007829" key="5">
    <source>
        <dbReference type="PDB" id="2XBP"/>
    </source>
</evidence>
<evidence type="ECO:0007829" key="6">
    <source>
        <dbReference type="PDB" id="2XG8"/>
    </source>
</evidence>
<evidence type="ECO:0007829" key="7">
    <source>
        <dbReference type="PDB" id="2XZW"/>
    </source>
</evidence>
<evidence type="ECO:0007829" key="8">
    <source>
        <dbReference type="PDB" id="4AFF"/>
    </source>
</evidence>
<feature type="chain" id="PRO_0000139794" description="Nitrogen regulatory protein P-II">
    <location>
        <begin position="1"/>
        <end position="112"/>
    </location>
</feature>
<feature type="modified residue" description="Phosphoserine" evidence="2">
    <location>
        <position position="49"/>
    </location>
</feature>
<feature type="modified residue" description="O-UMP-tyrosine" evidence="1">
    <location>
        <position position="51"/>
    </location>
</feature>
<feature type="sequence conflict" description="In Ref. 1; AAA27312." evidence="4" ref="1">
    <original>T</original>
    <variation>P</variation>
    <location>
        <position position="83"/>
    </location>
</feature>
<feature type="strand" evidence="8">
    <location>
        <begin position="2"/>
        <end position="8"/>
    </location>
</feature>
<feature type="helix" evidence="8">
    <location>
        <begin position="10"/>
        <end position="12"/>
    </location>
</feature>
<feature type="helix" evidence="8">
    <location>
        <begin position="13"/>
        <end position="22"/>
    </location>
</feature>
<feature type="strand" evidence="8">
    <location>
        <begin position="29"/>
        <end position="35"/>
    </location>
</feature>
<feature type="turn" evidence="7">
    <location>
        <begin position="38"/>
        <end position="41"/>
    </location>
</feature>
<feature type="strand" evidence="5">
    <location>
        <begin position="44"/>
        <end position="46"/>
    </location>
</feature>
<feature type="strand" evidence="5">
    <location>
        <begin position="49"/>
        <end position="53"/>
    </location>
</feature>
<feature type="strand" evidence="8">
    <location>
        <begin position="56"/>
        <end position="65"/>
    </location>
</feature>
<feature type="helix" evidence="8">
    <location>
        <begin position="67"/>
        <end position="69"/>
    </location>
</feature>
<feature type="helix" evidence="8">
    <location>
        <begin position="70"/>
        <end position="81"/>
    </location>
</feature>
<feature type="strand" evidence="6">
    <location>
        <begin position="84"/>
        <end position="86"/>
    </location>
</feature>
<feature type="strand" evidence="8">
    <location>
        <begin position="89"/>
        <end position="95"/>
    </location>
</feature>
<feature type="strand" evidence="7">
    <location>
        <begin position="98"/>
        <end position="101"/>
    </location>
</feature>
<feature type="turn" evidence="8">
    <location>
        <begin position="102"/>
        <end position="104"/>
    </location>
</feature>
<feature type="helix" evidence="8">
    <location>
        <begin position="109"/>
        <end position="112"/>
    </location>
</feature>